<gene>
    <name evidence="1" type="primary">VMA21</name>
    <name type="ordered locus">KLLA0D15312g</name>
</gene>
<feature type="chain" id="PRO_0000377589" description="Vacuolar ATPase assembly integral membrane protein VMA21">
    <location>
        <begin position="1"/>
        <end position="77"/>
    </location>
</feature>
<feature type="topological domain" description="Cytoplasmic" evidence="1">
    <location>
        <begin position="1"/>
        <end position="8"/>
    </location>
</feature>
<feature type="transmembrane region" description="Helical" evidence="1">
    <location>
        <begin position="9"/>
        <end position="29"/>
    </location>
</feature>
<feature type="topological domain" description="Lumenal" evidence="1">
    <location>
        <begin position="30"/>
        <end position="38"/>
    </location>
</feature>
<feature type="transmembrane region" description="Helical" evidence="1">
    <location>
        <begin position="39"/>
        <end position="59"/>
    </location>
</feature>
<feature type="topological domain" description="Cytoplasmic" evidence="1">
    <location>
        <begin position="60"/>
        <end position="77"/>
    </location>
</feature>
<feature type="short sequence motif" description="Prevents secretion from ER">
    <location>
        <begin position="74"/>
        <end position="77"/>
    </location>
</feature>
<proteinExistence type="inferred from homology"/>
<accession>Q6CQP9</accession>
<evidence type="ECO:0000255" key="1">
    <source>
        <dbReference type="HAMAP-Rule" id="MF_03058"/>
    </source>
</evidence>
<protein>
    <recommendedName>
        <fullName evidence="1">Vacuolar ATPase assembly integral membrane protein VMA21</fullName>
    </recommendedName>
</protein>
<reference key="1">
    <citation type="journal article" date="2004" name="Nature">
        <title>Genome evolution in yeasts.</title>
        <authorList>
            <person name="Dujon B."/>
            <person name="Sherman D."/>
            <person name="Fischer G."/>
            <person name="Durrens P."/>
            <person name="Casaregola S."/>
            <person name="Lafontaine I."/>
            <person name="de Montigny J."/>
            <person name="Marck C."/>
            <person name="Neuveglise C."/>
            <person name="Talla E."/>
            <person name="Goffard N."/>
            <person name="Frangeul L."/>
            <person name="Aigle M."/>
            <person name="Anthouard V."/>
            <person name="Babour A."/>
            <person name="Barbe V."/>
            <person name="Barnay S."/>
            <person name="Blanchin S."/>
            <person name="Beckerich J.-M."/>
            <person name="Beyne E."/>
            <person name="Bleykasten C."/>
            <person name="Boisrame A."/>
            <person name="Boyer J."/>
            <person name="Cattolico L."/>
            <person name="Confanioleri F."/>
            <person name="de Daruvar A."/>
            <person name="Despons L."/>
            <person name="Fabre E."/>
            <person name="Fairhead C."/>
            <person name="Ferry-Dumazet H."/>
            <person name="Groppi A."/>
            <person name="Hantraye F."/>
            <person name="Hennequin C."/>
            <person name="Jauniaux N."/>
            <person name="Joyet P."/>
            <person name="Kachouri R."/>
            <person name="Kerrest A."/>
            <person name="Koszul R."/>
            <person name="Lemaire M."/>
            <person name="Lesur I."/>
            <person name="Ma L."/>
            <person name="Muller H."/>
            <person name="Nicaud J.-M."/>
            <person name="Nikolski M."/>
            <person name="Oztas S."/>
            <person name="Ozier-Kalogeropoulos O."/>
            <person name="Pellenz S."/>
            <person name="Potier S."/>
            <person name="Richard G.-F."/>
            <person name="Straub M.-L."/>
            <person name="Suleau A."/>
            <person name="Swennen D."/>
            <person name="Tekaia F."/>
            <person name="Wesolowski-Louvel M."/>
            <person name="Westhof E."/>
            <person name="Wirth B."/>
            <person name="Zeniou-Meyer M."/>
            <person name="Zivanovic Y."/>
            <person name="Bolotin-Fukuhara M."/>
            <person name="Thierry A."/>
            <person name="Bouchier C."/>
            <person name="Caudron B."/>
            <person name="Scarpelli C."/>
            <person name="Gaillardin C."/>
            <person name="Weissenbach J."/>
            <person name="Wincker P."/>
            <person name="Souciet J.-L."/>
        </authorList>
    </citation>
    <scope>NUCLEOTIDE SEQUENCE [LARGE SCALE GENOMIC DNA]</scope>
    <source>
        <strain>ATCC 8585 / CBS 2359 / DSM 70799 / NBRC 1267 / NRRL Y-1140 / WM37</strain>
    </source>
</reference>
<sequence length="77" mass="8509">MPVDVPRSVIAKLMFFTVAMVVLPVLTFFWLQEHTDNTLVSGGLAAAMANLVLIAYVIMAFQEDSSSSEDDETKKEK</sequence>
<comment type="function">
    <text evidence="1">Required for the assembly of the V0 complex of the vacuolar ATPase (V-ATPase) in the endoplasmic reticulum.</text>
</comment>
<comment type="subcellular location">
    <subcellularLocation>
        <location evidence="1">Endoplasmic reticulum membrane</location>
        <topology evidence="1">Multi-pass membrane protein</topology>
    </subcellularLocation>
    <subcellularLocation>
        <location evidence="1">Endoplasmic reticulum-Golgi intermediate compartment membrane</location>
        <topology evidence="1">Multi-pass membrane protein</topology>
    </subcellularLocation>
    <subcellularLocation>
        <location evidence="1">Cytoplasmic vesicle</location>
        <location evidence="1">COPII-coated vesicle membrane</location>
        <topology evidence="1">Multi-pass membrane protein</topology>
    </subcellularLocation>
</comment>
<comment type="similarity">
    <text evidence="1">Belongs to the VMA21 family.</text>
</comment>
<keyword id="KW-0968">Cytoplasmic vesicle</keyword>
<keyword id="KW-0256">Endoplasmic reticulum</keyword>
<keyword id="KW-0472">Membrane</keyword>
<keyword id="KW-1185">Reference proteome</keyword>
<keyword id="KW-0812">Transmembrane</keyword>
<keyword id="KW-1133">Transmembrane helix</keyword>
<dbReference type="EMBL" id="CR382124">
    <property type="protein sequence ID" value="CAH00836.2"/>
    <property type="molecule type" value="Genomic_DNA"/>
</dbReference>
<dbReference type="RefSeq" id="XP_453740.2">
    <property type="nucleotide sequence ID" value="XM_453740.2"/>
</dbReference>
<dbReference type="SMR" id="Q6CQP9"/>
<dbReference type="FunCoup" id="Q6CQP9">
    <property type="interactions" value="68"/>
</dbReference>
<dbReference type="STRING" id="284590.Q6CQP9"/>
<dbReference type="PaxDb" id="284590-Q6CQP9"/>
<dbReference type="KEGG" id="kla:KLLA0_D15312g"/>
<dbReference type="eggNOG" id="ENOG502SBNA">
    <property type="taxonomic scope" value="Eukaryota"/>
</dbReference>
<dbReference type="HOGENOM" id="CLU_154717_1_0_1"/>
<dbReference type="InParanoid" id="Q6CQP9"/>
<dbReference type="Proteomes" id="UP000000598">
    <property type="component" value="Chromosome D"/>
</dbReference>
<dbReference type="GO" id="GO:0005789">
    <property type="term" value="C:endoplasmic reticulum membrane"/>
    <property type="evidence" value="ECO:0007669"/>
    <property type="project" value="UniProtKB-SubCell"/>
</dbReference>
<dbReference type="GO" id="GO:0033116">
    <property type="term" value="C:endoplasmic reticulum-Golgi intermediate compartment membrane"/>
    <property type="evidence" value="ECO:0007669"/>
    <property type="project" value="UniProtKB-SubCell"/>
</dbReference>
<dbReference type="GO" id="GO:0012507">
    <property type="term" value="C:ER to Golgi transport vesicle membrane"/>
    <property type="evidence" value="ECO:0007669"/>
    <property type="project" value="UniProtKB-SubCell"/>
</dbReference>
<dbReference type="GO" id="GO:0070072">
    <property type="term" value="P:vacuolar proton-transporting V-type ATPase complex assembly"/>
    <property type="evidence" value="ECO:0007669"/>
    <property type="project" value="UniProtKB-UniRule"/>
</dbReference>
<dbReference type="HAMAP" id="MF_03058">
    <property type="entry name" value="VMA21"/>
    <property type="match status" value="1"/>
</dbReference>
<dbReference type="InterPro" id="IPR019013">
    <property type="entry name" value="Vma21"/>
</dbReference>
<dbReference type="PANTHER" id="PTHR31792">
    <property type="entry name" value="VACUOLAR ATPASE ASSEMBLY INTEGRAL MEMBRANE PROTEIN VMA21"/>
    <property type="match status" value="1"/>
</dbReference>
<dbReference type="PANTHER" id="PTHR31792:SF3">
    <property type="entry name" value="VACUOLAR ATPASE ASSEMBLY INTEGRAL MEMBRANE PROTEIN VMA21"/>
    <property type="match status" value="1"/>
</dbReference>
<dbReference type="Pfam" id="PF09446">
    <property type="entry name" value="VMA21"/>
    <property type="match status" value="1"/>
</dbReference>
<name>VMA21_KLULA</name>
<organism>
    <name type="scientific">Kluyveromyces lactis (strain ATCC 8585 / CBS 2359 / DSM 70799 / NBRC 1267 / NRRL Y-1140 / WM37)</name>
    <name type="common">Yeast</name>
    <name type="synonym">Candida sphaerica</name>
    <dbReference type="NCBI Taxonomy" id="284590"/>
    <lineage>
        <taxon>Eukaryota</taxon>
        <taxon>Fungi</taxon>
        <taxon>Dikarya</taxon>
        <taxon>Ascomycota</taxon>
        <taxon>Saccharomycotina</taxon>
        <taxon>Saccharomycetes</taxon>
        <taxon>Saccharomycetales</taxon>
        <taxon>Saccharomycetaceae</taxon>
        <taxon>Kluyveromyces</taxon>
    </lineage>
</organism>